<dbReference type="EC" id="2.7.8.13" evidence="1"/>
<dbReference type="EMBL" id="FM200053">
    <property type="protein sequence ID" value="CAR58234.1"/>
    <property type="molecule type" value="Genomic_DNA"/>
</dbReference>
<dbReference type="RefSeq" id="WP_000964137.1">
    <property type="nucleotide sequence ID" value="NC_011147.1"/>
</dbReference>
<dbReference type="SMR" id="B5BLB9"/>
<dbReference type="KEGG" id="sek:SSPA0123"/>
<dbReference type="HOGENOM" id="CLU_023982_0_0_6"/>
<dbReference type="UniPathway" id="UPA00219"/>
<dbReference type="Proteomes" id="UP000001869">
    <property type="component" value="Chromosome"/>
</dbReference>
<dbReference type="GO" id="GO:0005886">
    <property type="term" value="C:plasma membrane"/>
    <property type="evidence" value="ECO:0007669"/>
    <property type="project" value="UniProtKB-SubCell"/>
</dbReference>
<dbReference type="GO" id="GO:0046872">
    <property type="term" value="F:metal ion binding"/>
    <property type="evidence" value="ECO:0007669"/>
    <property type="project" value="UniProtKB-KW"/>
</dbReference>
<dbReference type="GO" id="GO:0008963">
    <property type="term" value="F:phospho-N-acetylmuramoyl-pentapeptide-transferase activity"/>
    <property type="evidence" value="ECO:0007669"/>
    <property type="project" value="UniProtKB-UniRule"/>
</dbReference>
<dbReference type="GO" id="GO:0051992">
    <property type="term" value="F:UDP-N-acetylmuramoyl-L-alanyl-D-glutamyl-meso-2,6-diaminopimelyl-D-alanyl-D-alanine:undecaprenyl-phosphate transferase activity"/>
    <property type="evidence" value="ECO:0007669"/>
    <property type="project" value="RHEA"/>
</dbReference>
<dbReference type="GO" id="GO:0051301">
    <property type="term" value="P:cell division"/>
    <property type="evidence" value="ECO:0007669"/>
    <property type="project" value="UniProtKB-KW"/>
</dbReference>
<dbReference type="GO" id="GO:0071555">
    <property type="term" value="P:cell wall organization"/>
    <property type="evidence" value="ECO:0007669"/>
    <property type="project" value="UniProtKB-KW"/>
</dbReference>
<dbReference type="GO" id="GO:0009252">
    <property type="term" value="P:peptidoglycan biosynthetic process"/>
    <property type="evidence" value="ECO:0007669"/>
    <property type="project" value="UniProtKB-UniRule"/>
</dbReference>
<dbReference type="GO" id="GO:0008360">
    <property type="term" value="P:regulation of cell shape"/>
    <property type="evidence" value="ECO:0007669"/>
    <property type="project" value="UniProtKB-KW"/>
</dbReference>
<dbReference type="CDD" id="cd06852">
    <property type="entry name" value="GT_MraY"/>
    <property type="match status" value="1"/>
</dbReference>
<dbReference type="HAMAP" id="MF_00038">
    <property type="entry name" value="MraY"/>
    <property type="match status" value="1"/>
</dbReference>
<dbReference type="InterPro" id="IPR000715">
    <property type="entry name" value="Glycosyl_transferase_4"/>
</dbReference>
<dbReference type="InterPro" id="IPR003524">
    <property type="entry name" value="PNAcMuramoyl-5peptid_Trfase"/>
</dbReference>
<dbReference type="InterPro" id="IPR018480">
    <property type="entry name" value="PNAcMuramoyl-5peptid_Trfase_CS"/>
</dbReference>
<dbReference type="NCBIfam" id="TIGR00445">
    <property type="entry name" value="mraY"/>
    <property type="match status" value="1"/>
</dbReference>
<dbReference type="PANTHER" id="PTHR22926">
    <property type="entry name" value="PHOSPHO-N-ACETYLMURAMOYL-PENTAPEPTIDE-TRANSFERASE"/>
    <property type="match status" value="1"/>
</dbReference>
<dbReference type="PANTHER" id="PTHR22926:SF5">
    <property type="entry name" value="PHOSPHO-N-ACETYLMURAMOYL-PENTAPEPTIDE-TRANSFERASE HOMOLOG"/>
    <property type="match status" value="1"/>
</dbReference>
<dbReference type="Pfam" id="PF00953">
    <property type="entry name" value="Glycos_transf_4"/>
    <property type="match status" value="1"/>
</dbReference>
<dbReference type="Pfam" id="PF10555">
    <property type="entry name" value="MraY_sig1"/>
    <property type="match status" value="1"/>
</dbReference>
<dbReference type="PROSITE" id="PS01347">
    <property type="entry name" value="MRAY_1"/>
    <property type="match status" value="1"/>
</dbReference>
<dbReference type="PROSITE" id="PS01348">
    <property type="entry name" value="MRAY_2"/>
    <property type="match status" value="1"/>
</dbReference>
<comment type="function">
    <text evidence="1">Catalyzes the initial step of the lipid cycle reactions in the biosynthesis of the cell wall peptidoglycan: transfers peptidoglycan precursor phospho-MurNAc-pentapeptide from UDP-MurNAc-pentapeptide onto the lipid carrier undecaprenyl phosphate, yielding undecaprenyl-pyrophosphoryl-MurNAc-pentapeptide, known as lipid I.</text>
</comment>
<comment type="catalytic activity">
    <reaction evidence="1">
        <text>UDP-N-acetyl-alpha-D-muramoyl-L-alanyl-gamma-D-glutamyl-meso-2,6-diaminopimeloyl-D-alanyl-D-alanine + di-trans,octa-cis-undecaprenyl phosphate = di-trans,octa-cis-undecaprenyl diphospho-N-acetyl-alpha-D-muramoyl-L-alanyl-D-glutamyl-meso-2,6-diaminopimeloyl-D-alanyl-D-alanine + UMP</text>
        <dbReference type="Rhea" id="RHEA:28386"/>
        <dbReference type="ChEBI" id="CHEBI:57865"/>
        <dbReference type="ChEBI" id="CHEBI:60392"/>
        <dbReference type="ChEBI" id="CHEBI:61386"/>
        <dbReference type="ChEBI" id="CHEBI:61387"/>
        <dbReference type="EC" id="2.7.8.13"/>
    </reaction>
</comment>
<comment type="cofactor">
    <cofactor evidence="1">
        <name>Mg(2+)</name>
        <dbReference type="ChEBI" id="CHEBI:18420"/>
    </cofactor>
</comment>
<comment type="pathway">
    <text evidence="1">Cell wall biogenesis; peptidoglycan biosynthesis.</text>
</comment>
<comment type="subcellular location">
    <subcellularLocation>
        <location evidence="1">Cell inner membrane</location>
        <topology evidence="1">Multi-pass membrane protein</topology>
    </subcellularLocation>
</comment>
<comment type="similarity">
    <text evidence="1">Belongs to the glycosyltransferase 4 family. MraY subfamily.</text>
</comment>
<sequence length="360" mass="40014">MLVWLAEHLVKYYSGFNVFSYLTFRAIVSLLTALFISLWMGPRMIARLQKLSFGQVVRNDGPESHFSKRGTPTMGGIMILTAIVISVLLWAYPSNPYVWCVLVVLIGYGIIGFVDDYHKVVRKDTKGLIARWKYFWMSVIALGVAFALYLVGKDTPATQLVVPFFKDVMPQLGLFYILLSYFVIVGTGNAVNLTDGLDGLAIMPTVFVAAGFALVAWATGNMNFANYLHIPYLRYAGELVIVCTAIVGAGLGFLWFNTYPAQVFMGDVGSLALGGALGIIAVLLRQEFLLVIMGGVFVVETLSVILQVGSFKLRGQRIFRMAPIHHHYELKGWPEPRVIVRFWIISLMLVLIGLATLKVR</sequence>
<proteinExistence type="inferred from homology"/>
<protein>
    <recommendedName>
        <fullName evidence="1">Phospho-N-acetylmuramoyl-pentapeptide-transferase</fullName>
        <ecNumber evidence="1">2.7.8.13</ecNumber>
    </recommendedName>
    <alternativeName>
        <fullName evidence="1">UDP-MurNAc-pentapeptide phosphotransferase</fullName>
    </alternativeName>
</protein>
<organism>
    <name type="scientific">Salmonella paratyphi A (strain AKU_12601)</name>
    <dbReference type="NCBI Taxonomy" id="554290"/>
    <lineage>
        <taxon>Bacteria</taxon>
        <taxon>Pseudomonadati</taxon>
        <taxon>Pseudomonadota</taxon>
        <taxon>Gammaproteobacteria</taxon>
        <taxon>Enterobacterales</taxon>
        <taxon>Enterobacteriaceae</taxon>
        <taxon>Salmonella</taxon>
    </lineage>
</organism>
<name>MRAY_SALPK</name>
<feature type="chain" id="PRO_1000090670" description="Phospho-N-acetylmuramoyl-pentapeptide-transferase">
    <location>
        <begin position="1"/>
        <end position="360"/>
    </location>
</feature>
<feature type="topological domain" description="Periplasmic" evidence="1">
    <location>
        <begin position="1"/>
        <end position="25"/>
    </location>
</feature>
<feature type="transmembrane region" description="Helical" evidence="1">
    <location>
        <begin position="26"/>
        <end position="46"/>
    </location>
</feature>
<feature type="topological domain" description="Cytoplasmic" evidence="1">
    <location>
        <begin position="47"/>
        <end position="71"/>
    </location>
</feature>
<feature type="transmembrane region" description="Helical" evidence="1">
    <location>
        <begin position="72"/>
        <end position="92"/>
    </location>
</feature>
<feature type="topological domain" description="Periplasmic" evidence="1">
    <location>
        <position position="93"/>
    </location>
</feature>
<feature type="transmembrane region" description="Helical" evidence="1">
    <location>
        <begin position="94"/>
        <end position="114"/>
    </location>
</feature>
<feature type="topological domain" description="Cytoplasmic" evidence="1">
    <location>
        <begin position="115"/>
        <end position="131"/>
    </location>
</feature>
<feature type="transmembrane region" description="Helical" evidence="1">
    <location>
        <begin position="132"/>
        <end position="152"/>
    </location>
</feature>
<feature type="topological domain" description="Periplasmic" evidence="1">
    <location>
        <begin position="153"/>
        <end position="167"/>
    </location>
</feature>
<feature type="transmembrane region" description="Helical" evidence="1">
    <location>
        <begin position="168"/>
        <end position="188"/>
    </location>
</feature>
<feature type="topological domain" description="Cytoplasmic" evidence="1">
    <location>
        <begin position="189"/>
        <end position="198"/>
    </location>
</feature>
<feature type="transmembrane region" description="Helical" evidence="1">
    <location>
        <begin position="199"/>
        <end position="219"/>
    </location>
</feature>
<feature type="topological domain" description="Periplasmic" evidence="1">
    <location>
        <begin position="220"/>
        <end position="235"/>
    </location>
</feature>
<feature type="transmembrane region" description="Helical" evidence="1">
    <location>
        <begin position="236"/>
        <end position="256"/>
    </location>
</feature>
<feature type="topological domain" description="Cytoplasmic" evidence="1">
    <location>
        <begin position="257"/>
        <end position="262"/>
    </location>
</feature>
<feature type="transmembrane region" description="Helical" evidence="1">
    <location>
        <begin position="263"/>
        <end position="283"/>
    </location>
</feature>
<feature type="topological domain" description="Periplasmic" evidence="1">
    <location>
        <begin position="284"/>
        <end position="287"/>
    </location>
</feature>
<feature type="transmembrane region" description="Helical" evidence="1">
    <location>
        <begin position="288"/>
        <end position="308"/>
    </location>
</feature>
<feature type="topological domain" description="Cytoplasmic" evidence="1">
    <location>
        <begin position="309"/>
        <end position="337"/>
    </location>
</feature>
<feature type="transmembrane region" description="Helical" evidence="1">
    <location>
        <begin position="338"/>
        <end position="358"/>
    </location>
</feature>
<feature type="topological domain" description="Periplasmic" evidence="1">
    <location>
        <begin position="359"/>
        <end position="360"/>
    </location>
</feature>
<accession>B5BLB9</accession>
<reference key="1">
    <citation type="journal article" date="2009" name="BMC Genomics">
        <title>Pseudogene accumulation in the evolutionary histories of Salmonella enterica serovars Paratyphi A and Typhi.</title>
        <authorList>
            <person name="Holt K.E."/>
            <person name="Thomson N.R."/>
            <person name="Wain J."/>
            <person name="Langridge G.C."/>
            <person name="Hasan R."/>
            <person name="Bhutta Z.A."/>
            <person name="Quail M.A."/>
            <person name="Norbertczak H."/>
            <person name="Walker D."/>
            <person name="Simmonds M."/>
            <person name="White B."/>
            <person name="Bason N."/>
            <person name="Mungall K."/>
            <person name="Dougan G."/>
            <person name="Parkhill J."/>
        </authorList>
    </citation>
    <scope>NUCLEOTIDE SEQUENCE [LARGE SCALE GENOMIC DNA]</scope>
    <source>
        <strain>AKU_12601</strain>
    </source>
</reference>
<evidence type="ECO:0000255" key="1">
    <source>
        <dbReference type="HAMAP-Rule" id="MF_00038"/>
    </source>
</evidence>
<gene>
    <name evidence="1" type="primary">mraY</name>
    <name type="ordered locus">SSPA0123</name>
</gene>
<keyword id="KW-0131">Cell cycle</keyword>
<keyword id="KW-0132">Cell division</keyword>
<keyword id="KW-0997">Cell inner membrane</keyword>
<keyword id="KW-1003">Cell membrane</keyword>
<keyword id="KW-0133">Cell shape</keyword>
<keyword id="KW-0961">Cell wall biogenesis/degradation</keyword>
<keyword id="KW-0460">Magnesium</keyword>
<keyword id="KW-0472">Membrane</keyword>
<keyword id="KW-0479">Metal-binding</keyword>
<keyword id="KW-0573">Peptidoglycan synthesis</keyword>
<keyword id="KW-0808">Transferase</keyword>
<keyword id="KW-0812">Transmembrane</keyword>
<keyword id="KW-1133">Transmembrane helix</keyword>